<feature type="chain" id="PRO_0000226261" description="Leucine-rich repeat-containing protein 40">
    <location>
        <begin position="1"/>
        <end position="603"/>
    </location>
</feature>
<feature type="repeat" description="LRR 1">
    <location>
        <begin position="83"/>
        <end position="104"/>
    </location>
</feature>
<feature type="repeat" description="LRR 2">
    <location>
        <begin position="106"/>
        <end position="127"/>
    </location>
</feature>
<feature type="repeat" description="LRR 3">
    <location>
        <begin position="129"/>
        <end position="150"/>
    </location>
</feature>
<feature type="repeat" description="LRR 4">
    <location>
        <begin position="152"/>
        <end position="173"/>
    </location>
</feature>
<feature type="repeat" description="LRR 5">
    <location>
        <begin position="175"/>
        <end position="196"/>
    </location>
</feature>
<feature type="repeat" description="LRR 6">
    <location>
        <begin position="198"/>
        <end position="219"/>
    </location>
</feature>
<feature type="repeat" description="LRR 7">
    <location>
        <begin position="221"/>
        <end position="242"/>
    </location>
</feature>
<feature type="repeat" description="LRR 8">
    <location>
        <begin position="244"/>
        <end position="265"/>
    </location>
</feature>
<feature type="repeat" description="LRR 9">
    <location>
        <begin position="266"/>
        <end position="286"/>
    </location>
</feature>
<feature type="repeat" description="LRR 10">
    <location>
        <begin position="290"/>
        <end position="311"/>
    </location>
</feature>
<feature type="repeat" description="LRR 11">
    <location>
        <begin position="313"/>
        <end position="335"/>
    </location>
</feature>
<feature type="repeat" description="LRR 12">
    <location>
        <begin position="336"/>
        <end position="357"/>
    </location>
</feature>
<feature type="repeat" description="LRR 13">
    <location>
        <begin position="401"/>
        <end position="422"/>
    </location>
</feature>
<feature type="repeat" description="LRR 14">
    <location>
        <begin position="427"/>
        <end position="449"/>
    </location>
</feature>
<feature type="repeat" description="LRR 15">
    <location>
        <begin position="451"/>
        <end position="473"/>
    </location>
</feature>
<feature type="repeat" description="LRR 16">
    <location>
        <begin position="474"/>
        <end position="495"/>
    </location>
</feature>
<feature type="repeat" description="LRR 17">
    <location>
        <begin position="497"/>
        <end position="518"/>
    </location>
</feature>
<feature type="repeat" description="LRR 18">
    <location>
        <begin position="520"/>
        <end position="541"/>
    </location>
</feature>
<feature type="repeat" description="LRR 19">
    <location>
        <begin position="544"/>
        <end position="565"/>
    </location>
</feature>
<feature type="repeat" description="LRR 20">
    <location>
        <begin position="567"/>
        <end position="588"/>
    </location>
</feature>
<feature type="region of interest" description="Disordered" evidence="1">
    <location>
        <begin position="1"/>
        <end position="27"/>
    </location>
</feature>
<gene>
    <name type="primary">LRRC40</name>
    <name type="ORF">RCJMB04_5h5</name>
</gene>
<reference key="1">
    <citation type="journal article" date="2005" name="Genome Biol.">
        <title>Full-length cDNAs from chicken bursal lymphocytes to facilitate gene function analysis.</title>
        <authorList>
            <person name="Caldwell R.B."/>
            <person name="Kierzek A.M."/>
            <person name="Arakawa H."/>
            <person name="Bezzubov Y."/>
            <person name="Zaim J."/>
            <person name="Fiedler P."/>
            <person name="Kutter S."/>
            <person name="Blagodatski A."/>
            <person name="Kostovska D."/>
            <person name="Koter M."/>
            <person name="Plachy J."/>
            <person name="Carninci P."/>
            <person name="Hayashizaki Y."/>
            <person name="Buerstedde J.-M."/>
        </authorList>
    </citation>
    <scope>NUCLEOTIDE SEQUENCE [LARGE SCALE MRNA]</scope>
    <source>
        <strain>CB</strain>
        <tissue>Bursa of Fabricius</tissue>
    </source>
</reference>
<proteinExistence type="evidence at transcript level"/>
<protein>
    <recommendedName>
        <fullName>Leucine-rich repeat-containing protein 40</fullName>
    </recommendedName>
</protein>
<evidence type="ECO:0000256" key="1">
    <source>
        <dbReference type="SAM" id="MobiDB-lite"/>
    </source>
</evidence>
<dbReference type="EMBL" id="AJ719704">
    <property type="protein sequence ID" value="CAG31363.1"/>
    <property type="molecule type" value="mRNA"/>
</dbReference>
<dbReference type="RefSeq" id="NP_001026466.1">
    <property type="nucleotide sequence ID" value="NM_001031295.2"/>
</dbReference>
<dbReference type="SMR" id="Q5ZLN0"/>
<dbReference type="FunCoup" id="Q5ZLN0">
    <property type="interactions" value="2132"/>
</dbReference>
<dbReference type="STRING" id="9031.ENSGALP00000018412"/>
<dbReference type="PaxDb" id="9031-ENSGALP00000018412"/>
<dbReference type="Ensembl" id="ENSGALT00010057578.1">
    <property type="protein sequence ID" value="ENSGALP00010034975.1"/>
    <property type="gene ID" value="ENSGALG00010023641.1"/>
</dbReference>
<dbReference type="GeneID" id="424713"/>
<dbReference type="KEGG" id="gga:424713"/>
<dbReference type="CTD" id="55631"/>
<dbReference type="VEuPathDB" id="HostDB:geneid_424713"/>
<dbReference type="eggNOG" id="KOG0472">
    <property type="taxonomic scope" value="Eukaryota"/>
</dbReference>
<dbReference type="GeneTree" id="ENSGT00940000156968"/>
<dbReference type="InParanoid" id="Q5ZLN0"/>
<dbReference type="OMA" id="CMLHKLT"/>
<dbReference type="OrthoDB" id="660555at2759"/>
<dbReference type="PhylomeDB" id="Q5ZLN0"/>
<dbReference type="PRO" id="PR:Q5ZLN0"/>
<dbReference type="Proteomes" id="UP000000539">
    <property type="component" value="Chromosome 8"/>
</dbReference>
<dbReference type="FunFam" id="3.80.10.10:FF:000116">
    <property type="entry name" value="Leucine-rich repeat-containing protein 40"/>
    <property type="match status" value="1"/>
</dbReference>
<dbReference type="FunFam" id="3.80.10.10:FF:000193">
    <property type="entry name" value="Leucine-rich repeat-containing protein 40"/>
    <property type="match status" value="1"/>
</dbReference>
<dbReference type="FunFam" id="3.80.10.10:FF:000265">
    <property type="entry name" value="Leucine-rich repeat-containing protein 40"/>
    <property type="match status" value="1"/>
</dbReference>
<dbReference type="FunFam" id="3.80.10.10:FF:000206">
    <property type="entry name" value="leucine-rich repeat-containing protein 40"/>
    <property type="match status" value="1"/>
</dbReference>
<dbReference type="Gene3D" id="3.80.10.10">
    <property type="entry name" value="Ribonuclease Inhibitor"/>
    <property type="match status" value="4"/>
</dbReference>
<dbReference type="InterPro" id="IPR001611">
    <property type="entry name" value="Leu-rich_rpt"/>
</dbReference>
<dbReference type="InterPro" id="IPR003591">
    <property type="entry name" value="Leu-rich_rpt_typical-subtyp"/>
</dbReference>
<dbReference type="InterPro" id="IPR032675">
    <property type="entry name" value="LRR_dom_sf"/>
</dbReference>
<dbReference type="InterPro" id="IPR050216">
    <property type="entry name" value="LRR_domain-containing"/>
</dbReference>
<dbReference type="InterPro" id="IPR055414">
    <property type="entry name" value="LRR_R13L4/SHOC2-like"/>
</dbReference>
<dbReference type="PANTHER" id="PTHR48051">
    <property type="match status" value="1"/>
</dbReference>
<dbReference type="PANTHER" id="PTHR48051:SF1">
    <property type="entry name" value="RAS SUPPRESSOR PROTEIN 1"/>
    <property type="match status" value="1"/>
</dbReference>
<dbReference type="Pfam" id="PF00560">
    <property type="entry name" value="LRR_1"/>
    <property type="match status" value="1"/>
</dbReference>
<dbReference type="Pfam" id="PF23598">
    <property type="entry name" value="LRR_14"/>
    <property type="match status" value="1"/>
</dbReference>
<dbReference type="Pfam" id="PF13855">
    <property type="entry name" value="LRR_8"/>
    <property type="match status" value="2"/>
</dbReference>
<dbReference type="PRINTS" id="PR00019">
    <property type="entry name" value="LEURICHRPT"/>
</dbReference>
<dbReference type="SMART" id="SM00364">
    <property type="entry name" value="LRR_BAC"/>
    <property type="match status" value="11"/>
</dbReference>
<dbReference type="SMART" id="SM00365">
    <property type="entry name" value="LRR_SD22"/>
    <property type="match status" value="7"/>
</dbReference>
<dbReference type="SMART" id="SM00369">
    <property type="entry name" value="LRR_TYP"/>
    <property type="match status" value="13"/>
</dbReference>
<dbReference type="SUPFAM" id="SSF52058">
    <property type="entry name" value="L domain-like"/>
    <property type="match status" value="2"/>
</dbReference>
<dbReference type="PROSITE" id="PS51450">
    <property type="entry name" value="LRR"/>
    <property type="match status" value="16"/>
</dbReference>
<organism>
    <name type="scientific">Gallus gallus</name>
    <name type="common">Chicken</name>
    <dbReference type="NCBI Taxonomy" id="9031"/>
    <lineage>
        <taxon>Eukaryota</taxon>
        <taxon>Metazoa</taxon>
        <taxon>Chordata</taxon>
        <taxon>Craniata</taxon>
        <taxon>Vertebrata</taxon>
        <taxon>Euteleostomi</taxon>
        <taxon>Archelosauria</taxon>
        <taxon>Archosauria</taxon>
        <taxon>Dinosauria</taxon>
        <taxon>Saurischia</taxon>
        <taxon>Theropoda</taxon>
        <taxon>Coelurosauria</taxon>
        <taxon>Aves</taxon>
        <taxon>Neognathae</taxon>
        <taxon>Galloanserae</taxon>
        <taxon>Galliformes</taxon>
        <taxon>Phasianidae</taxon>
        <taxon>Phasianinae</taxon>
        <taxon>Gallus</taxon>
    </lineage>
</organism>
<keyword id="KW-0433">Leucine-rich repeat</keyword>
<keyword id="KW-1185">Reference proteome</keyword>
<keyword id="KW-0677">Repeat</keyword>
<name>LRC40_CHICK</name>
<accession>Q5ZLN0</accession>
<sequence length="603" mass="67476">MAAARRARAGDPRAGFRRAAEEQSPAVPQGLIRAARKSGQLNLAGRGLGEVPQHVWRINLDTPEEAHQNLSFGAADRWWEQTDLTKLILASNQLRCLSEDVRLLPALTVLDVHDNQLTSLPSALGQLENLQKLDVSHNKLKSIPEELLQLSHLKGLLLQHNELSHLPDGFGQLVSLEELDLSNNHLTDIPKSFALLINLVRLNLACNQLKDLPADISAMKSLRQLDCTKNYLESVPSELASMASLEQLYLRKNKLRSLPELPSCKLLKELHAGENQIEILNAENLKHLNSLSVLELRDNKIKSVPDEITLLQKLERLDLANNDISRLPYTLGNLSQLKFLALEGNPLRTIRRDLLQKGTQELLKYLRSRIQDDKASPNEEPPVTAMTLPSESRINMHAITTLKLLDYSEKQVAVIPDDVFSAVRSNPVTSVNFSKNQLTAIPPRIVELKDSVCDVNFGFNKISSVSLELCTLHKLTHLDIRNNVLTSLPEEMEALTRLQVINLSFNRFKVFPSVLYRMLALETILLSNNQVGSIDPLQLKKMEQLGTLDLQNNDLLQVPPELGNCETLRTLLLEGNPFRTPRAAILAKGTAAVLEYLRSRIPT</sequence>